<comment type="function">
    <text evidence="1">Accelerates the degradation of transcripts by removing pyrophosphate from the 5'-end of triphosphorylated RNA, leading to a more labile monophosphorylated state that can stimulate subsequent ribonuclease cleavage.</text>
</comment>
<comment type="cofactor">
    <cofactor evidence="1">
        <name>a divalent metal cation</name>
        <dbReference type="ChEBI" id="CHEBI:60240"/>
    </cofactor>
</comment>
<comment type="similarity">
    <text evidence="1">Belongs to the Nudix hydrolase family. RppH subfamily.</text>
</comment>
<evidence type="ECO:0000255" key="1">
    <source>
        <dbReference type="HAMAP-Rule" id="MF_00298"/>
    </source>
</evidence>
<reference key="1">
    <citation type="submission" date="2007-06" db="EMBL/GenBank/DDBJ databases">
        <title>Complete sequence of Marinomonas sp. MWYL1.</title>
        <authorList>
            <consortium name="US DOE Joint Genome Institute"/>
            <person name="Copeland A."/>
            <person name="Lucas S."/>
            <person name="Lapidus A."/>
            <person name="Barry K."/>
            <person name="Glavina del Rio T."/>
            <person name="Dalin E."/>
            <person name="Tice H."/>
            <person name="Pitluck S."/>
            <person name="Kiss H."/>
            <person name="Brettin T."/>
            <person name="Bruce D."/>
            <person name="Detter J.C."/>
            <person name="Han C."/>
            <person name="Schmutz J."/>
            <person name="Larimer F."/>
            <person name="Land M."/>
            <person name="Hauser L."/>
            <person name="Kyrpides N."/>
            <person name="Kim E."/>
            <person name="Johnston A.W.B."/>
            <person name="Todd J.D."/>
            <person name="Rogers R."/>
            <person name="Wexler M."/>
            <person name="Bond P.L."/>
            <person name="Li Y."/>
            <person name="Richardson P."/>
        </authorList>
    </citation>
    <scope>NUCLEOTIDE SEQUENCE [LARGE SCALE GENOMIC DNA]</scope>
    <source>
        <strain>MWYL1</strain>
    </source>
</reference>
<feature type="chain" id="PRO_1000078966" description="RNA pyrophosphohydrolase">
    <location>
        <begin position="1"/>
        <end position="161"/>
    </location>
</feature>
<feature type="domain" description="Nudix hydrolase" evidence="1">
    <location>
        <begin position="6"/>
        <end position="149"/>
    </location>
</feature>
<feature type="short sequence motif" description="Nudix box">
    <location>
        <begin position="38"/>
        <end position="59"/>
    </location>
</feature>
<accession>A6W1S0</accession>
<gene>
    <name evidence="1" type="primary">rppH</name>
    <name evidence="1" type="synonym">nudH</name>
    <name type="ordered locus">Mmwyl1_3748</name>
</gene>
<dbReference type="EC" id="3.6.1.-" evidence="1"/>
<dbReference type="EMBL" id="CP000749">
    <property type="protein sequence ID" value="ABR72649.1"/>
    <property type="molecule type" value="Genomic_DNA"/>
</dbReference>
<dbReference type="SMR" id="A6W1S0"/>
<dbReference type="STRING" id="400668.Mmwyl1_3748"/>
<dbReference type="KEGG" id="mmw:Mmwyl1_3748"/>
<dbReference type="eggNOG" id="COG0494">
    <property type="taxonomic scope" value="Bacteria"/>
</dbReference>
<dbReference type="HOGENOM" id="CLU_087195_3_1_6"/>
<dbReference type="OrthoDB" id="9816040at2"/>
<dbReference type="GO" id="GO:0005737">
    <property type="term" value="C:cytoplasm"/>
    <property type="evidence" value="ECO:0007669"/>
    <property type="project" value="TreeGrafter"/>
</dbReference>
<dbReference type="GO" id="GO:0034353">
    <property type="term" value="F:mRNA 5'-diphosphatase activity"/>
    <property type="evidence" value="ECO:0007669"/>
    <property type="project" value="TreeGrafter"/>
</dbReference>
<dbReference type="GO" id="GO:0006402">
    <property type="term" value="P:mRNA catabolic process"/>
    <property type="evidence" value="ECO:0007669"/>
    <property type="project" value="TreeGrafter"/>
</dbReference>
<dbReference type="CDD" id="cd03671">
    <property type="entry name" value="NUDIX_Ap4A_hydrolase_plant_like"/>
    <property type="match status" value="1"/>
</dbReference>
<dbReference type="FunFam" id="3.90.79.10:FF:000001">
    <property type="entry name" value="RNA pyrophosphohydrolase"/>
    <property type="match status" value="1"/>
</dbReference>
<dbReference type="Gene3D" id="3.90.79.10">
    <property type="entry name" value="Nucleoside Triphosphate Pyrophosphohydrolase"/>
    <property type="match status" value="1"/>
</dbReference>
<dbReference type="HAMAP" id="MF_00298">
    <property type="entry name" value="Nudix_RppH"/>
    <property type="match status" value="1"/>
</dbReference>
<dbReference type="InterPro" id="IPR020476">
    <property type="entry name" value="Nudix_hydrolase"/>
</dbReference>
<dbReference type="InterPro" id="IPR015797">
    <property type="entry name" value="NUDIX_hydrolase-like_dom_sf"/>
</dbReference>
<dbReference type="InterPro" id="IPR020084">
    <property type="entry name" value="NUDIX_hydrolase_CS"/>
</dbReference>
<dbReference type="InterPro" id="IPR000086">
    <property type="entry name" value="NUDIX_hydrolase_dom"/>
</dbReference>
<dbReference type="InterPro" id="IPR022927">
    <property type="entry name" value="RppH"/>
</dbReference>
<dbReference type="NCBIfam" id="NF001934">
    <property type="entry name" value="PRK00714.1-1"/>
    <property type="match status" value="1"/>
</dbReference>
<dbReference type="NCBIfam" id="NF001937">
    <property type="entry name" value="PRK00714.1-4"/>
    <property type="match status" value="1"/>
</dbReference>
<dbReference type="NCBIfam" id="NF001938">
    <property type="entry name" value="PRK00714.1-5"/>
    <property type="match status" value="1"/>
</dbReference>
<dbReference type="PANTHER" id="PTHR23114">
    <property type="entry name" value="M7GPPPN-MRNA HYDROLASE"/>
    <property type="match status" value="1"/>
</dbReference>
<dbReference type="PANTHER" id="PTHR23114:SF17">
    <property type="entry name" value="M7GPPPN-MRNA HYDROLASE"/>
    <property type="match status" value="1"/>
</dbReference>
<dbReference type="Pfam" id="PF00293">
    <property type="entry name" value="NUDIX"/>
    <property type="match status" value="1"/>
</dbReference>
<dbReference type="PRINTS" id="PR00502">
    <property type="entry name" value="NUDIXFAMILY"/>
</dbReference>
<dbReference type="SUPFAM" id="SSF55811">
    <property type="entry name" value="Nudix"/>
    <property type="match status" value="1"/>
</dbReference>
<dbReference type="PROSITE" id="PS51462">
    <property type="entry name" value="NUDIX"/>
    <property type="match status" value="1"/>
</dbReference>
<dbReference type="PROSITE" id="PS00893">
    <property type="entry name" value="NUDIX_BOX"/>
    <property type="match status" value="1"/>
</dbReference>
<sequence>MIDADGYRPNVGIILMNERGQLLWARRVGQNAWQFPQGGIKSDETPEEALFRELKEEVGLDPHQVEIIGKTRGWLRYRLPKRMLRHNSKPLCIGQKQKWFLLSIRCPDASVCVDGTETPEFDGWRWVSYWYPLGQVVAFKKDVYRRALKELIPSAHRRLEK</sequence>
<name>RPPH_MARMS</name>
<organism>
    <name type="scientific">Marinomonas sp. (strain MWYL1)</name>
    <dbReference type="NCBI Taxonomy" id="400668"/>
    <lineage>
        <taxon>Bacteria</taxon>
        <taxon>Pseudomonadati</taxon>
        <taxon>Pseudomonadota</taxon>
        <taxon>Gammaproteobacteria</taxon>
        <taxon>Oceanospirillales</taxon>
        <taxon>Oceanospirillaceae</taxon>
        <taxon>Marinomonas</taxon>
    </lineage>
</organism>
<keyword id="KW-0378">Hydrolase</keyword>
<proteinExistence type="inferred from homology"/>
<protein>
    <recommendedName>
        <fullName evidence="1">RNA pyrophosphohydrolase</fullName>
        <ecNumber evidence="1">3.6.1.-</ecNumber>
    </recommendedName>
    <alternativeName>
        <fullName evidence="1">(Di)nucleoside polyphosphate hydrolase</fullName>
    </alternativeName>
</protein>